<accession>Q032W2</accession>
<sequence length="107" mass="12446">MTHTHDHEHDHNHEPDYITLVEENGNESLFQILITIDGQEEFGKNYVVLQPTEFEEDEQGLIDVLAYSFTENADGTEGDLQPIPEDAEDEWDMIEEVFNSFMDEQED</sequence>
<comment type="similarity">
    <text evidence="1">Belongs to the UPF0473 family.</text>
</comment>
<feature type="chain" id="PRO_0000304843" description="UPF0473 protein LACR_0139">
    <location>
        <begin position="1"/>
        <end position="107"/>
    </location>
</feature>
<protein>
    <recommendedName>
        <fullName evidence="1">UPF0473 protein LACR_0139</fullName>
    </recommendedName>
</protein>
<name>Y139_LACLS</name>
<proteinExistence type="inferred from homology"/>
<evidence type="ECO:0000255" key="1">
    <source>
        <dbReference type="HAMAP-Rule" id="MF_01448"/>
    </source>
</evidence>
<gene>
    <name type="ordered locus">LACR_0139</name>
</gene>
<dbReference type="EMBL" id="CP000425">
    <property type="protein sequence ID" value="ABJ71760.1"/>
    <property type="molecule type" value="Genomic_DNA"/>
</dbReference>
<dbReference type="RefSeq" id="WP_011675193.1">
    <property type="nucleotide sequence ID" value="NC_008527.1"/>
</dbReference>
<dbReference type="KEGG" id="llc:LACR_0139"/>
<dbReference type="HOGENOM" id="CLU_146610_2_1_9"/>
<dbReference type="Proteomes" id="UP000000240">
    <property type="component" value="Chromosome"/>
</dbReference>
<dbReference type="HAMAP" id="MF_01448">
    <property type="entry name" value="UPF0473"/>
    <property type="match status" value="1"/>
</dbReference>
<dbReference type="InterPro" id="IPR009711">
    <property type="entry name" value="UPF0473"/>
</dbReference>
<dbReference type="NCBIfam" id="NF010215">
    <property type="entry name" value="PRK13678.1-2"/>
    <property type="match status" value="1"/>
</dbReference>
<dbReference type="PANTHER" id="PTHR40066">
    <property type="entry name" value="UPF0473 PROTEIN CBO2561/CLC_2432"/>
    <property type="match status" value="1"/>
</dbReference>
<dbReference type="PANTHER" id="PTHR40066:SF1">
    <property type="entry name" value="UPF0473 PROTEIN CBO2561_CLC_2432"/>
    <property type="match status" value="1"/>
</dbReference>
<dbReference type="Pfam" id="PF06949">
    <property type="entry name" value="DUF1292"/>
    <property type="match status" value="1"/>
</dbReference>
<reference key="1">
    <citation type="journal article" date="2006" name="Proc. Natl. Acad. Sci. U.S.A.">
        <title>Comparative genomics of the lactic acid bacteria.</title>
        <authorList>
            <person name="Makarova K.S."/>
            <person name="Slesarev A."/>
            <person name="Wolf Y.I."/>
            <person name="Sorokin A."/>
            <person name="Mirkin B."/>
            <person name="Koonin E.V."/>
            <person name="Pavlov A."/>
            <person name="Pavlova N."/>
            <person name="Karamychev V."/>
            <person name="Polouchine N."/>
            <person name="Shakhova V."/>
            <person name="Grigoriev I."/>
            <person name="Lou Y."/>
            <person name="Rohksar D."/>
            <person name="Lucas S."/>
            <person name="Huang K."/>
            <person name="Goodstein D.M."/>
            <person name="Hawkins T."/>
            <person name="Plengvidhya V."/>
            <person name="Welker D."/>
            <person name="Hughes J."/>
            <person name="Goh Y."/>
            <person name="Benson A."/>
            <person name="Baldwin K."/>
            <person name="Lee J.-H."/>
            <person name="Diaz-Muniz I."/>
            <person name="Dosti B."/>
            <person name="Smeianov V."/>
            <person name="Wechter W."/>
            <person name="Barabote R."/>
            <person name="Lorca G."/>
            <person name="Altermann E."/>
            <person name="Barrangou R."/>
            <person name="Ganesan B."/>
            <person name="Xie Y."/>
            <person name="Rawsthorne H."/>
            <person name="Tamir D."/>
            <person name="Parker C."/>
            <person name="Breidt F."/>
            <person name="Broadbent J.R."/>
            <person name="Hutkins R."/>
            <person name="O'Sullivan D."/>
            <person name="Steele J."/>
            <person name="Unlu G."/>
            <person name="Saier M.H. Jr."/>
            <person name="Klaenhammer T."/>
            <person name="Richardson P."/>
            <person name="Kozyavkin S."/>
            <person name="Weimer B.C."/>
            <person name="Mills D.A."/>
        </authorList>
    </citation>
    <scope>NUCLEOTIDE SEQUENCE [LARGE SCALE GENOMIC DNA]</scope>
    <source>
        <strain>SK11</strain>
    </source>
</reference>
<organism>
    <name type="scientific">Lactococcus lactis subsp. cremoris (strain SK11)</name>
    <dbReference type="NCBI Taxonomy" id="272622"/>
    <lineage>
        <taxon>Bacteria</taxon>
        <taxon>Bacillati</taxon>
        <taxon>Bacillota</taxon>
        <taxon>Bacilli</taxon>
        <taxon>Lactobacillales</taxon>
        <taxon>Streptococcaceae</taxon>
        <taxon>Lactococcus</taxon>
        <taxon>Lactococcus cremoris subsp. cremoris</taxon>
    </lineage>
</organism>